<feature type="chain" id="PRO_1000017099" description="tRNA pseudouridine synthase A">
    <location>
        <begin position="1"/>
        <end position="262"/>
    </location>
</feature>
<feature type="active site" description="Nucleophile" evidence="1">
    <location>
        <position position="54"/>
    </location>
</feature>
<feature type="binding site" evidence="1">
    <location>
        <position position="113"/>
    </location>
    <ligand>
        <name>substrate</name>
    </ligand>
</feature>
<organism>
    <name type="scientific">Lactobacillus delbrueckii subsp. bulgaricus (strain ATCC BAA-365 / Lb-18)</name>
    <dbReference type="NCBI Taxonomy" id="321956"/>
    <lineage>
        <taxon>Bacteria</taxon>
        <taxon>Bacillati</taxon>
        <taxon>Bacillota</taxon>
        <taxon>Bacilli</taxon>
        <taxon>Lactobacillales</taxon>
        <taxon>Lactobacillaceae</taxon>
        <taxon>Lactobacillus</taxon>
    </lineage>
</organism>
<accession>Q04BY4</accession>
<gene>
    <name evidence="1" type="primary">truA</name>
    <name type="ordered locus">LBUL_0381</name>
</gene>
<evidence type="ECO:0000255" key="1">
    <source>
        <dbReference type="HAMAP-Rule" id="MF_00171"/>
    </source>
</evidence>
<sequence>MTSRYKLTLSYDGHDFHGFQSQPGQRTIQGTVEEILKQMTKGQEVRVFGSGRTDAGVHSVGQVIHFDYPGREIPAANMIKALNSQLPMDMVFTDCEIVDKDFHSRFSVKGKWYRYRVSLDGFVNPFKRFYTGHYPYPVDVEKMQEAAKDLLGRHDFTSFAASGGQIEDKVRDMYYVNVALDEENNEVIMDFIATGFLYNMVRILVATLLEIGNGRRPVHDLKRVIAAKNRLEVQQTAQACGLYLYHVFYEEVPRKYRLDLDL</sequence>
<reference key="1">
    <citation type="journal article" date="2006" name="Proc. Natl. Acad. Sci. U.S.A.">
        <title>Comparative genomics of the lactic acid bacteria.</title>
        <authorList>
            <person name="Makarova K.S."/>
            <person name="Slesarev A."/>
            <person name="Wolf Y.I."/>
            <person name="Sorokin A."/>
            <person name="Mirkin B."/>
            <person name="Koonin E.V."/>
            <person name="Pavlov A."/>
            <person name="Pavlova N."/>
            <person name="Karamychev V."/>
            <person name="Polouchine N."/>
            <person name="Shakhova V."/>
            <person name="Grigoriev I."/>
            <person name="Lou Y."/>
            <person name="Rohksar D."/>
            <person name="Lucas S."/>
            <person name="Huang K."/>
            <person name="Goodstein D.M."/>
            <person name="Hawkins T."/>
            <person name="Plengvidhya V."/>
            <person name="Welker D."/>
            <person name="Hughes J."/>
            <person name="Goh Y."/>
            <person name="Benson A."/>
            <person name="Baldwin K."/>
            <person name="Lee J.-H."/>
            <person name="Diaz-Muniz I."/>
            <person name="Dosti B."/>
            <person name="Smeianov V."/>
            <person name="Wechter W."/>
            <person name="Barabote R."/>
            <person name="Lorca G."/>
            <person name="Altermann E."/>
            <person name="Barrangou R."/>
            <person name="Ganesan B."/>
            <person name="Xie Y."/>
            <person name="Rawsthorne H."/>
            <person name="Tamir D."/>
            <person name="Parker C."/>
            <person name="Breidt F."/>
            <person name="Broadbent J.R."/>
            <person name="Hutkins R."/>
            <person name="O'Sullivan D."/>
            <person name="Steele J."/>
            <person name="Unlu G."/>
            <person name="Saier M.H. Jr."/>
            <person name="Klaenhammer T."/>
            <person name="Richardson P."/>
            <person name="Kozyavkin S."/>
            <person name="Weimer B.C."/>
            <person name="Mills D.A."/>
        </authorList>
    </citation>
    <scope>NUCLEOTIDE SEQUENCE [LARGE SCALE GENOMIC DNA]</scope>
    <source>
        <strain>ATCC BAA-365 / Lb-18</strain>
    </source>
</reference>
<comment type="function">
    <text evidence="1">Formation of pseudouridine at positions 38, 39 and 40 in the anticodon stem and loop of transfer RNAs.</text>
</comment>
<comment type="catalytic activity">
    <reaction evidence="1">
        <text>uridine(38/39/40) in tRNA = pseudouridine(38/39/40) in tRNA</text>
        <dbReference type="Rhea" id="RHEA:22376"/>
        <dbReference type="Rhea" id="RHEA-COMP:10085"/>
        <dbReference type="Rhea" id="RHEA-COMP:10087"/>
        <dbReference type="ChEBI" id="CHEBI:65314"/>
        <dbReference type="ChEBI" id="CHEBI:65315"/>
        <dbReference type="EC" id="5.4.99.12"/>
    </reaction>
</comment>
<comment type="subunit">
    <text evidence="1">Homodimer.</text>
</comment>
<comment type="similarity">
    <text evidence="1">Belongs to the tRNA pseudouridine synthase TruA family.</text>
</comment>
<proteinExistence type="inferred from homology"/>
<keyword id="KW-0413">Isomerase</keyword>
<keyword id="KW-0819">tRNA processing</keyword>
<dbReference type="EC" id="5.4.99.12" evidence="1"/>
<dbReference type="EMBL" id="CP000412">
    <property type="protein sequence ID" value="ABJ58038.1"/>
    <property type="molecule type" value="Genomic_DNA"/>
</dbReference>
<dbReference type="RefSeq" id="WP_003620873.1">
    <property type="nucleotide sequence ID" value="NC_008529.1"/>
</dbReference>
<dbReference type="SMR" id="Q04BY4"/>
<dbReference type="KEGG" id="lbu:LBUL_0381"/>
<dbReference type="HOGENOM" id="CLU_014673_0_1_9"/>
<dbReference type="BioCyc" id="LDEL321956:LBUL_RS01780-MONOMER"/>
<dbReference type="GO" id="GO:0003723">
    <property type="term" value="F:RNA binding"/>
    <property type="evidence" value="ECO:0007669"/>
    <property type="project" value="InterPro"/>
</dbReference>
<dbReference type="GO" id="GO:0160147">
    <property type="term" value="F:tRNA pseudouridine(38-40) synthase activity"/>
    <property type="evidence" value="ECO:0007669"/>
    <property type="project" value="UniProtKB-EC"/>
</dbReference>
<dbReference type="GO" id="GO:0031119">
    <property type="term" value="P:tRNA pseudouridine synthesis"/>
    <property type="evidence" value="ECO:0007669"/>
    <property type="project" value="UniProtKB-UniRule"/>
</dbReference>
<dbReference type="CDD" id="cd02570">
    <property type="entry name" value="PseudoU_synth_EcTruA"/>
    <property type="match status" value="1"/>
</dbReference>
<dbReference type="FunFam" id="3.30.70.580:FF:000001">
    <property type="entry name" value="tRNA pseudouridine synthase A"/>
    <property type="match status" value="1"/>
</dbReference>
<dbReference type="Gene3D" id="3.30.70.660">
    <property type="entry name" value="Pseudouridine synthase I, catalytic domain, C-terminal subdomain"/>
    <property type="match status" value="1"/>
</dbReference>
<dbReference type="Gene3D" id="3.30.70.580">
    <property type="entry name" value="Pseudouridine synthase I, catalytic domain, N-terminal subdomain"/>
    <property type="match status" value="1"/>
</dbReference>
<dbReference type="HAMAP" id="MF_00171">
    <property type="entry name" value="TruA"/>
    <property type="match status" value="1"/>
</dbReference>
<dbReference type="InterPro" id="IPR020103">
    <property type="entry name" value="PsdUridine_synth_cat_dom_sf"/>
</dbReference>
<dbReference type="InterPro" id="IPR001406">
    <property type="entry name" value="PsdUridine_synth_TruA"/>
</dbReference>
<dbReference type="InterPro" id="IPR020097">
    <property type="entry name" value="PsdUridine_synth_TruA_a/b_dom"/>
</dbReference>
<dbReference type="InterPro" id="IPR020095">
    <property type="entry name" value="PsdUridine_synth_TruA_C"/>
</dbReference>
<dbReference type="InterPro" id="IPR020094">
    <property type="entry name" value="TruA/RsuA/RluB/E/F_N"/>
</dbReference>
<dbReference type="NCBIfam" id="TIGR00071">
    <property type="entry name" value="hisT_truA"/>
    <property type="match status" value="1"/>
</dbReference>
<dbReference type="PANTHER" id="PTHR11142">
    <property type="entry name" value="PSEUDOURIDYLATE SYNTHASE"/>
    <property type="match status" value="1"/>
</dbReference>
<dbReference type="PANTHER" id="PTHR11142:SF0">
    <property type="entry name" value="TRNA PSEUDOURIDINE SYNTHASE-LIKE 1"/>
    <property type="match status" value="1"/>
</dbReference>
<dbReference type="Pfam" id="PF01416">
    <property type="entry name" value="PseudoU_synth_1"/>
    <property type="match status" value="2"/>
</dbReference>
<dbReference type="PIRSF" id="PIRSF001430">
    <property type="entry name" value="tRNA_psdUrid_synth"/>
    <property type="match status" value="1"/>
</dbReference>
<dbReference type="SUPFAM" id="SSF55120">
    <property type="entry name" value="Pseudouridine synthase"/>
    <property type="match status" value="1"/>
</dbReference>
<protein>
    <recommendedName>
        <fullName evidence="1">tRNA pseudouridine synthase A</fullName>
        <ecNumber evidence="1">5.4.99.12</ecNumber>
    </recommendedName>
    <alternativeName>
        <fullName evidence="1">tRNA pseudouridine(38-40) synthase</fullName>
    </alternativeName>
    <alternativeName>
        <fullName evidence="1">tRNA pseudouridylate synthase I</fullName>
    </alternativeName>
    <alternativeName>
        <fullName evidence="1">tRNA-uridine isomerase I</fullName>
    </alternativeName>
</protein>
<name>TRUA_LACDB</name>